<keyword id="KW-1185">Reference proteome</keyword>
<keyword id="KW-0687">Ribonucleoprotein</keyword>
<keyword id="KW-0689">Ribosomal protein</keyword>
<name>RL36_CORK4</name>
<sequence>MKVRKSLRSLKNKPGAQVVRRHGKVFVINKKDPRFKARQG</sequence>
<evidence type="ECO:0000255" key="1">
    <source>
        <dbReference type="HAMAP-Rule" id="MF_00251"/>
    </source>
</evidence>
<evidence type="ECO:0000305" key="2"/>
<accession>C4LJZ9</accession>
<organism>
    <name type="scientific">Corynebacterium kroppenstedtii (strain DSM 44385 / JCM 11950 / CIP 105744 / CCUG 35717)</name>
    <dbReference type="NCBI Taxonomy" id="645127"/>
    <lineage>
        <taxon>Bacteria</taxon>
        <taxon>Bacillati</taxon>
        <taxon>Actinomycetota</taxon>
        <taxon>Actinomycetes</taxon>
        <taxon>Mycobacteriales</taxon>
        <taxon>Corynebacteriaceae</taxon>
        <taxon>Corynebacterium</taxon>
    </lineage>
</organism>
<dbReference type="EMBL" id="CP001620">
    <property type="protein sequence ID" value="ACR18154.1"/>
    <property type="molecule type" value="Genomic_DNA"/>
</dbReference>
<dbReference type="SMR" id="C4LJZ9"/>
<dbReference type="STRING" id="645127.ckrop_1416"/>
<dbReference type="KEGG" id="ckp:ckrop_1416"/>
<dbReference type="eggNOG" id="COG0257">
    <property type="taxonomic scope" value="Bacteria"/>
</dbReference>
<dbReference type="HOGENOM" id="CLU_135723_3_1_11"/>
<dbReference type="OrthoDB" id="9801558at2"/>
<dbReference type="Proteomes" id="UP000001473">
    <property type="component" value="Chromosome"/>
</dbReference>
<dbReference type="GO" id="GO:1990904">
    <property type="term" value="C:ribonucleoprotein complex"/>
    <property type="evidence" value="ECO:0007669"/>
    <property type="project" value="UniProtKB-KW"/>
</dbReference>
<dbReference type="GO" id="GO:0005840">
    <property type="term" value="C:ribosome"/>
    <property type="evidence" value="ECO:0007669"/>
    <property type="project" value="UniProtKB-KW"/>
</dbReference>
<dbReference type="GO" id="GO:0003735">
    <property type="term" value="F:structural constituent of ribosome"/>
    <property type="evidence" value="ECO:0007669"/>
    <property type="project" value="InterPro"/>
</dbReference>
<dbReference type="GO" id="GO:0006412">
    <property type="term" value="P:translation"/>
    <property type="evidence" value="ECO:0007669"/>
    <property type="project" value="UniProtKB-UniRule"/>
</dbReference>
<dbReference type="HAMAP" id="MF_00251">
    <property type="entry name" value="Ribosomal_bL36"/>
    <property type="match status" value="1"/>
</dbReference>
<dbReference type="InterPro" id="IPR000473">
    <property type="entry name" value="Ribosomal_bL36"/>
</dbReference>
<dbReference type="InterPro" id="IPR035977">
    <property type="entry name" value="Ribosomal_bL36_sp"/>
</dbReference>
<dbReference type="InterPro" id="IPR047621">
    <property type="entry name" value="Ribosomal_L36_bact"/>
</dbReference>
<dbReference type="NCBIfam" id="NF002021">
    <property type="entry name" value="PRK00831.1"/>
    <property type="match status" value="1"/>
</dbReference>
<dbReference type="PANTHER" id="PTHR47781">
    <property type="entry name" value="50S RIBOSOMAL PROTEIN L36 2"/>
    <property type="match status" value="1"/>
</dbReference>
<dbReference type="PANTHER" id="PTHR47781:SF1">
    <property type="entry name" value="LARGE RIBOSOMAL SUBUNIT PROTEIN BL36B"/>
    <property type="match status" value="1"/>
</dbReference>
<dbReference type="Pfam" id="PF00444">
    <property type="entry name" value="Ribosomal_L36"/>
    <property type="match status" value="1"/>
</dbReference>
<dbReference type="SUPFAM" id="SSF57840">
    <property type="entry name" value="Ribosomal protein L36"/>
    <property type="match status" value="1"/>
</dbReference>
<feature type="chain" id="PRO_1000204543" description="Large ribosomal subunit protein bL36">
    <location>
        <begin position="1"/>
        <end position="40"/>
    </location>
</feature>
<protein>
    <recommendedName>
        <fullName evidence="1">Large ribosomal subunit protein bL36</fullName>
    </recommendedName>
    <alternativeName>
        <fullName evidence="2">50S ribosomal protein L36</fullName>
    </alternativeName>
</protein>
<proteinExistence type="inferred from homology"/>
<reference key="1">
    <citation type="journal article" date="2008" name="J. Biotechnol.">
        <title>Ultrafast pyrosequencing of Corynebacterium kroppenstedtii DSM44385 revealed insights into the physiology of a lipophilic corynebacterium that lacks mycolic acids.</title>
        <authorList>
            <person name="Tauch A."/>
            <person name="Schneider J."/>
            <person name="Szczepanowski R."/>
            <person name="Tilker A."/>
            <person name="Viehoever P."/>
            <person name="Gartemann K.-H."/>
            <person name="Arnold W."/>
            <person name="Blom J."/>
            <person name="Brinkrolf K."/>
            <person name="Brune I."/>
            <person name="Goetker S."/>
            <person name="Weisshaar B."/>
            <person name="Goesmann A."/>
            <person name="Droege M."/>
            <person name="Puehler A."/>
        </authorList>
    </citation>
    <scope>NUCLEOTIDE SEQUENCE [LARGE SCALE GENOMIC DNA]</scope>
    <source>
        <strain>DSM 44385 / JCM 11950 / CIP 105744 / CCUG 35717</strain>
    </source>
</reference>
<gene>
    <name evidence="1" type="primary">rpmJ</name>
    <name type="ordered locus">ckrop_1416</name>
</gene>
<comment type="similarity">
    <text evidence="1">Belongs to the bacterial ribosomal protein bL36 family.</text>
</comment>